<accession>B4DYI2</accession>
<proteinExistence type="evidence at protein level"/>
<reference key="1">
    <citation type="journal article" date="2004" name="Nat. Genet.">
        <title>Complete sequencing and characterization of 21,243 full-length human cDNAs.</title>
        <authorList>
            <person name="Ota T."/>
            <person name="Suzuki Y."/>
            <person name="Nishikawa T."/>
            <person name="Otsuki T."/>
            <person name="Sugiyama T."/>
            <person name="Irie R."/>
            <person name="Wakamatsu A."/>
            <person name="Hayashi K."/>
            <person name="Sato H."/>
            <person name="Nagai K."/>
            <person name="Kimura K."/>
            <person name="Makita H."/>
            <person name="Sekine M."/>
            <person name="Obayashi M."/>
            <person name="Nishi T."/>
            <person name="Shibahara T."/>
            <person name="Tanaka T."/>
            <person name="Ishii S."/>
            <person name="Yamamoto J."/>
            <person name="Saito K."/>
            <person name="Kawai Y."/>
            <person name="Isono Y."/>
            <person name="Nakamura Y."/>
            <person name="Nagahari K."/>
            <person name="Murakami K."/>
            <person name="Yasuda T."/>
            <person name="Iwayanagi T."/>
            <person name="Wagatsuma M."/>
            <person name="Shiratori A."/>
            <person name="Sudo H."/>
            <person name="Hosoiri T."/>
            <person name="Kaku Y."/>
            <person name="Kodaira H."/>
            <person name="Kondo H."/>
            <person name="Sugawara M."/>
            <person name="Takahashi M."/>
            <person name="Kanda K."/>
            <person name="Yokoi T."/>
            <person name="Furuya T."/>
            <person name="Kikkawa E."/>
            <person name="Omura Y."/>
            <person name="Abe K."/>
            <person name="Kamihara K."/>
            <person name="Katsuta N."/>
            <person name="Sato K."/>
            <person name="Tanikawa M."/>
            <person name="Yamazaki M."/>
            <person name="Ninomiya K."/>
            <person name="Ishibashi T."/>
            <person name="Yamashita H."/>
            <person name="Murakawa K."/>
            <person name="Fujimori K."/>
            <person name="Tanai H."/>
            <person name="Kimata M."/>
            <person name="Watanabe M."/>
            <person name="Hiraoka S."/>
            <person name="Chiba Y."/>
            <person name="Ishida S."/>
            <person name="Ono Y."/>
            <person name="Takiguchi S."/>
            <person name="Watanabe S."/>
            <person name="Yosida M."/>
            <person name="Hotuta T."/>
            <person name="Kusano J."/>
            <person name="Kanehori K."/>
            <person name="Takahashi-Fujii A."/>
            <person name="Hara H."/>
            <person name="Tanase T.-O."/>
            <person name="Nomura Y."/>
            <person name="Togiya S."/>
            <person name="Komai F."/>
            <person name="Hara R."/>
            <person name="Takeuchi K."/>
            <person name="Arita M."/>
            <person name="Imose N."/>
            <person name="Musashino K."/>
            <person name="Yuuki H."/>
            <person name="Oshima A."/>
            <person name="Sasaki N."/>
            <person name="Aotsuka S."/>
            <person name="Yoshikawa Y."/>
            <person name="Matsunawa H."/>
            <person name="Ichihara T."/>
            <person name="Shiohata N."/>
            <person name="Sano S."/>
            <person name="Moriya S."/>
            <person name="Momiyama H."/>
            <person name="Satoh N."/>
            <person name="Takami S."/>
            <person name="Terashima Y."/>
            <person name="Suzuki O."/>
            <person name="Nakagawa S."/>
            <person name="Senoh A."/>
            <person name="Mizoguchi H."/>
            <person name="Goto Y."/>
            <person name="Shimizu F."/>
            <person name="Wakebe H."/>
            <person name="Hishigaki H."/>
            <person name="Watanabe T."/>
            <person name="Sugiyama A."/>
            <person name="Takemoto M."/>
            <person name="Kawakami B."/>
            <person name="Yamazaki M."/>
            <person name="Watanabe K."/>
            <person name="Kumagai A."/>
            <person name="Itakura S."/>
            <person name="Fukuzumi Y."/>
            <person name="Fujimori Y."/>
            <person name="Komiyama M."/>
            <person name="Tashiro H."/>
            <person name="Tanigami A."/>
            <person name="Fujiwara T."/>
            <person name="Ono T."/>
            <person name="Yamada K."/>
            <person name="Fujii Y."/>
            <person name="Ozaki K."/>
            <person name="Hirao M."/>
            <person name="Ohmori Y."/>
            <person name="Kawabata A."/>
            <person name="Hikiji T."/>
            <person name="Kobatake N."/>
            <person name="Inagaki H."/>
            <person name="Ikema Y."/>
            <person name="Okamoto S."/>
            <person name="Okitani R."/>
            <person name="Kawakami T."/>
            <person name="Noguchi S."/>
            <person name="Itoh T."/>
            <person name="Shigeta K."/>
            <person name="Senba T."/>
            <person name="Matsumura K."/>
            <person name="Nakajima Y."/>
            <person name="Mizuno T."/>
            <person name="Morinaga M."/>
            <person name="Sasaki M."/>
            <person name="Togashi T."/>
            <person name="Oyama M."/>
            <person name="Hata H."/>
            <person name="Watanabe M."/>
            <person name="Komatsu T."/>
            <person name="Mizushima-Sugano J."/>
            <person name="Satoh T."/>
            <person name="Shirai Y."/>
            <person name="Takahashi Y."/>
            <person name="Nakagawa K."/>
            <person name="Okumura K."/>
            <person name="Nagase T."/>
            <person name="Nomura N."/>
            <person name="Kikuchi H."/>
            <person name="Masuho Y."/>
            <person name="Yamashita R."/>
            <person name="Nakai K."/>
            <person name="Yada T."/>
            <person name="Nakamura Y."/>
            <person name="Ohara O."/>
            <person name="Isogai T."/>
            <person name="Sugano S."/>
        </authorList>
    </citation>
    <scope>NUCLEOTIDE SEQUENCE [LARGE SCALE MRNA]</scope>
    <source>
        <tissue>Testis</tissue>
    </source>
</reference>
<reference key="2">
    <citation type="journal article" date="2004" name="Nature">
        <title>DNA sequence and analysis of human chromosome 9.</title>
        <authorList>
            <person name="Humphray S.J."/>
            <person name="Oliver K."/>
            <person name="Hunt A.R."/>
            <person name="Plumb R.W."/>
            <person name="Loveland J.E."/>
            <person name="Howe K.L."/>
            <person name="Andrews T.D."/>
            <person name="Searle S."/>
            <person name="Hunt S.E."/>
            <person name="Scott C.E."/>
            <person name="Jones M.C."/>
            <person name="Ainscough R."/>
            <person name="Almeida J.P."/>
            <person name="Ambrose K.D."/>
            <person name="Ashwell R.I.S."/>
            <person name="Babbage A.K."/>
            <person name="Babbage S."/>
            <person name="Bagguley C.L."/>
            <person name="Bailey J."/>
            <person name="Banerjee R."/>
            <person name="Barker D.J."/>
            <person name="Barlow K.F."/>
            <person name="Bates K."/>
            <person name="Beasley H."/>
            <person name="Beasley O."/>
            <person name="Bird C.P."/>
            <person name="Bray-Allen S."/>
            <person name="Brown A.J."/>
            <person name="Brown J.Y."/>
            <person name="Burford D."/>
            <person name="Burrill W."/>
            <person name="Burton J."/>
            <person name="Carder C."/>
            <person name="Carter N.P."/>
            <person name="Chapman J.C."/>
            <person name="Chen Y."/>
            <person name="Clarke G."/>
            <person name="Clark S.Y."/>
            <person name="Clee C.M."/>
            <person name="Clegg S."/>
            <person name="Collier R.E."/>
            <person name="Corby N."/>
            <person name="Crosier M."/>
            <person name="Cummings A.T."/>
            <person name="Davies J."/>
            <person name="Dhami P."/>
            <person name="Dunn M."/>
            <person name="Dutta I."/>
            <person name="Dyer L.W."/>
            <person name="Earthrowl M.E."/>
            <person name="Faulkner L."/>
            <person name="Fleming C.J."/>
            <person name="Frankish A."/>
            <person name="Frankland J.A."/>
            <person name="French L."/>
            <person name="Fricker D.G."/>
            <person name="Garner P."/>
            <person name="Garnett J."/>
            <person name="Ghori J."/>
            <person name="Gilbert J.G.R."/>
            <person name="Glison C."/>
            <person name="Grafham D.V."/>
            <person name="Gribble S."/>
            <person name="Griffiths C."/>
            <person name="Griffiths-Jones S."/>
            <person name="Grocock R."/>
            <person name="Guy J."/>
            <person name="Hall R.E."/>
            <person name="Hammond S."/>
            <person name="Harley J.L."/>
            <person name="Harrison E.S.I."/>
            <person name="Hart E.A."/>
            <person name="Heath P.D."/>
            <person name="Henderson C.D."/>
            <person name="Hopkins B.L."/>
            <person name="Howard P.J."/>
            <person name="Howden P.J."/>
            <person name="Huckle E."/>
            <person name="Johnson C."/>
            <person name="Johnson D."/>
            <person name="Joy A.A."/>
            <person name="Kay M."/>
            <person name="Keenan S."/>
            <person name="Kershaw J.K."/>
            <person name="Kimberley A.M."/>
            <person name="King A."/>
            <person name="Knights A."/>
            <person name="Laird G.K."/>
            <person name="Langford C."/>
            <person name="Lawlor S."/>
            <person name="Leongamornlert D.A."/>
            <person name="Leversha M."/>
            <person name="Lloyd C."/>
            <person name="Lloyd D.M."/>
            <person name="Lovell J."/>
            <person name="Martin S."/>
            <person name="Mashreghi-Mohammadi M."/>
            <person name="Matthews L."/>
            <person name="McLaren S."/>
            <person name="McLay K.E."/>
            <person name="McMurray A."/>
            <person name="Milne S."/>
            <person name="Nickerson T."/>
            <person name="Nisbett J."/>
            <person name="Nordsiek G."/>
            <person name="Pearce A.V."/>
            <person name="Peck A.I."/>
            <person name="Porter K.M."/>
            <person name="Pandian R."/>
            <person name="Pelan S."/>
            <person name="Phillimore B."/>
            <person name="Povey S."/>
            <person name="Ramsey Y."/>
            <person name="Rand V."/>
            <person name="Scharfe M."/>
            <person name="Sehra H.K."/>
            <person name="Shownkeen R."/>
            <person name="Sims S.K."/>
            <person name="Skuce C.D."/>
            <person name="Smith M."/>
            <person name="Steward C.A."/>
            <person name="Swarbreck D."/>
            <person name="Sycamore N."/>
            <person name="Tester J."/>
            <person name="Thorpe A."/>
            <person name="Tracey A."/>
            <person name="Tromans A."/>
            <person name="Thomas D.W."/>
            <person name="Wall M."/>
            <person name="Wallis J.M."/>
            <person name="West A.P."/>
            <person name="Whitehead S.L."/>
            <person name="Willey D.L."/>
            <person name="Williams S.A."/>
            <person name="Wilming L."/>
            <person name="Wray P.W."/>
            <person name="Young L."/>
            <person name="Ashurst J.L."/>
            <person name="Coulson A."/>
            <person name="Blocker H."/>
            <person name="Durbin R.M."/>
            <person name="Sulston J.E."/>
            <person name="Hubbard T."/>
            <person name="Jackson M.J."/>
            <person name="Bentley D.R."/>
            <person name="Beck S."/>
            <person name="Rogers J."/>
            <person name="Dunham I."/>
        </authorList>
    </citation>
    <scope>NUCLEOTIDE SEQUENCE [LARGE SCALE GENOMIC DNA]</scope>
</reference>
<dbReference type="EMBL" id="AK302448">
    <property type="protein sequence ID" value="BAG63744.1"/>
    <property type="molecule type" value="mRNA"/>
</dbReference>
<dbReference type="EMBL" id="AL353726">
    <property type="status" value="NOT_ANNOTATED_CDS"/>
    <property type="molecule type" value="Genomic_DNA"/>
</dbReference>
<dbReference type="CCDS" id="CCDS94435.1"/>
<dbReference type="RefSeq" id="NP_001159609.1">
    <property type="nucleotide sequence ID" value="NM_001166137.1"/>
</dbReference>
<dbReference type="GlyGen" id="B4DYI2">
    <property type="glycosylation" value="4 sites, 1 O-linked glycan (2 sites)"/>
</dbReference>
<dbReference type="iPTMnet" id="B4DYI2"/>
<dbReference type="PhosphoSitePlus" id="B4DYI2"/>
<dbReference type="BioMuta" id="HGNC:24508"/>
<dbReference type="jPOST" id="B4DYI2"/>
<dbReference type="MassIVE" id="B4DYI2"/>
<dbReference type="PeptideAtlas" id="B4DYI2"/>
<dbReference type="DNASU" id="645961"/>
<dbReference type="Ensembl" id="ENST00000675441.1">
    <property type="protein sequence ID" value="ENSP00000509164.1"/>
    <property type="gene ID" value="ENSG00000177910.9"/>
</dbReference>
<dbReference type="GeneID" id="645961"/>
<dbReference type="KEGG" id="hsa:645961"/>
<dbReference type="AGR" id="HGNC:24508"/>
<dbReference type="CTD" id="645961"/>
<dbReference type="DisGeNET" id="645961"/>
<dbReference type="GeneCards" id="SPATA31C2"/>
<dbReference type="HGNC" id="HGNC:24508">
    <property type="gene designation" value="SPATA31C2"/>
</dbReference>
<dbReference type="HPA" id="ENSG00000177910">
    <property type="expression patterns" value="Group enriched (epididymis, testis)"/>
</dbReference>
<dbReference type="neXtProt" id="NX_B4DYI2"/>
<dbReference type="GeneTree" id="ENSGT00950000183043"/>
<dbReference type="InParanoid" id="B4DYI2"/>
<dbReference type="PAN-GO" id="B4DYI2">
    <property type="GO annotations" value="0 GO annotations based on evolutionary models"/>
</dbReference>
<dbReference type="PathwayCommons" id="B4DYI2"/>
<dbReference type="BioGRID-ORCS" id="645961">
    <property type="hits" value="9 hits in 232 CRISPR screens"/>
</dbReference>
<dbReference type="GenomeRNAi" id="645961"/>
<dbReference type="Pharos" id="B4DYI2">
    <property type="development level" value="Tdark"/>
</dbReference>
<dbReference type="Proteomes" id="UP000005640">
    <property type="component" value="Chromosome 9"/>
</dbReference>
<dbReference type="RNAct" id="B4DYI2">
    <property type="molecule type" value="protein"/>
</dbReference>
<dbReference type="GO" id="GO:0016020">
    <property type="term" value="C:membrane"/>
    <property type="evidence" value="ECO:0007669"/>
    <property type="project" value="UniProtKB-SubCell"/>
</dbReference>
<dbReference type="GO" id="GO:0030154">
    <property type="term" value="P:cell differentiation"/>
    <property type="evidence" value="ECO:0007669"/>
    <property type="project" value="UniProtKB-KW"/>
</dbReference>
<dbReference type="GO" id="GO:0007283">
    <property type="term" value="P:spermatogenesis"/>
    <property type="evidence" value="ECO:0007669"/>
    <property type="project" value="UniProtKB-KW"/>
</dbReference>
<dbReference type="InterPro" id="IPR039509">
    <property type="entry name" value="SPATA31"/>
</dbReference>
<dbReference type="InterPro" id="IPR027970">
    <property type="entry name" value="SPATA31F3-like"/>
</dbReference>
<dbReference type="PANTHER" id="PTHR21859">
    <property type="entry name" value="ACROSOME-SPECIFIC PROTEIN"/>
    <property type="match status" value="1"/>
</dbReference>
<dbReference type="PANTHER" id="PTHR21859:SF44">
    <property type="entry name" value="SPERMATOGENESIS-ASSOCIATED PROTEIN 31C1-RELATED"/>
    <property type="match status" value="1"/>
</dbReference>
<dbReference type="Pfam" id="PF15371">
    <property type="entry name" value="DUF4599"/>
    <property type="match status" value="1"/>
</dbReference>
<dbReference type="Pfam" id="PF14650">
    <property type="entry name" value="FAM75"/>
    <property type="match status" value="1"/>
</dbReference>
<evidence type="ECO:0000250" key="1"/>
<evidence type="ECO:0000255" key="2"/>
<evidence type="ECO:0000256" key="3">
    <source>
        <dbReference type="SAM" id="MobiDB-lite"/>
    </source>
</evidence>
<evidence type="ECO:0000305" key="4"/>
<name>S31C2_HUMAN</name>
<keyword id="KW-0221">Differentiation</keyword>
<keyword id="KW-0472">Membrane</keyword>
<keyword id="KW-1267">Proteomics identification</keyword>
<keyword id="KW-1185">Reference proteome</keyword>
<keyword id="KW-0744">Spermatogenesis</keyword>
<keyword id="KW-0812">Transmembrane</keyword>
<keyword id="KW-1133">Transmembrane helix</keyword>
<feature type="chain" id="PRO_0000420571" description="Spermatogenesis-associated protein 31C2">
    <location>
        <begin position="1"/>
        <end position="1134"/>
    </location>
</feature>
<feature type="transmembrane region" description="Helical" evidence="2">
    <location>
        <begin position="23"/>
        <end position="43"/>
    </location>
</feature>
<feature type="region of interest" description="Disordered" evidence="3">
    <location>
        <begin position="54"/>
        <end position="87"/>
    </location>
</feature>
<feature type="region of interest" description="Disordered" evidence="3">
    <location>
        <begin position="115"/>
        <end position="243"/>
    </location>
</feature>
<feature type="region of interest" description="Disordered" evidence="3">
    <location>
        <begin position="477"/>
        <end position="504"/>
    </location>
</feature>
<feature type="region of interest" description="Disordered" evidence="3">
    <location>
        <begin position="524"/>
        <end position="561"/>
    </location>
</feature>
<feature type="region of interest" description="Disordered" evidence="3">
    <location>
        <begin position="727"/>
        <end position="807"/>
    </location>
</feature>
<feature type="region of interest" description="Disordered" evidence="3">
    <location>
        <begin position="928"/>
        <end position="1007"/>
    </location>
</feature>
<feature type="region of interest" description="Disordered" evidence="3">
    <location>
        <begin position="1111"/>
        <end position="1134"/>
    </location>
</feature>
<feature type="compositionally biased region" description="Basic residues" evidence="3">
    <location>
        <begin position="59"/>
        <end position="87"/>
    </location>
</feature>
<feature type="compositionally biased region" description="Basic and acidic residues" evidence="3">
    <location>
        <begin position="132"/>
        <end position="148"/>
    </location>
</feature>
<feature type="compositionally biased region" description="Low complexity" evidence="3">
    <location>
        <begin position="185"/>
        <end position="201"/>
    </location>
</feature>
<feature type="compositionally biased region" description="Pro residues" evidence="3">
    <location>
        <begin position="204"/>
        <end position="235"/>
    </location>
</feature>
<feature type="compositionally biased region" description="Polar residues" evidence="3">
    <location>
        <begin position="489"/>
        <end position="504"/>
    </location>
</feature>
<feature type="compositionally biased region" description="Polar residues" evidence="3">
    <location>
        <begin position="773"/>
        <end position="794"/>
    </location>
</feature>
<feature type="compositionally biased region" description="Polar residues" evidence="3">
    <location>
        <begin position="937"/>
        <end position="948"/>
    </location>
</feature>
<feature type="compositionally biased region" description="Basic and acidic residues" evidence="3">
    <location>
        <begin position="954"/>
        <end position="970"/>
    </location>
</feature>
<feature type="compositionally biased region" description="Polar residues" evidence="3">
    <location>
        <begin position="1111"/>
        <end position="1124"/>
    </location>
</feature>
<feature type="compositionally biased region" description="Basic and acidic residues" evidence="3">
    <location>
        <begin position="1125"/>
        <end position="1134"/>
    </location>
</feature>
<sequence>MENLPFPLKLLSASSLNTPSSTPWVLDIFLTLVFALGFFFLLLPYFSYLRCDNPPSPSPKKRKRHLVSQRPAGRRGRPRGRMKNHSLRACRECPRGLEETWDLLSQLQSLLGPHLEKGDFGQLSGPDPPGEVGKRTPDGASRSSHEPTEDAAPIVSPLASPDPRTKHPQDLASTPPPGPMTTSVSSLSASQPPEPSLLLEHPSPEPPALFPHPPRTPDPLACSPPPPKGFTPPPLRDSTLLTPSHCDSVALPLDTVPQSLSPREDLAASVPGISGLGGSNSQVSALSWSQETTKTWCVFNSSVQQDHLSRQRDTTMSPLLFQAQPLSHLEPESQPFISSTPQFWPTPMAQAEAQAHLQSSFPVLSPAFLSPMKNTGVACPASQNKVQALSLPETQHPERPLLKKQLEGGLALPSRVQKSQDVFSVSTPNLPQERLTSILPENFPVSPELWRQLEQHMGQRGRIQESLDLMQLQDELPGTSQAKGKPRPWQSSTSTGESSKEAQTVKFQLERDPCPHLGQILGETPQNLSRGMESFPGKVLGATSEESERNLRKPLRSDSGSDLLRRTERNHIENILKAHMSRKLGQTNEGLIPVSVRRSWLAVNQAFPVSNTHVKTSNLAAPKSRKACVNTAQVLSFLEPCTQQVLGAHIVRFWAKHRWGLPLRVLKPIQCFQLEKVSSLSLIQLAGPSSDTCESGAGSKVEVATFLGEPPMASLRKQVLTKPSVHMPERLQASSPACKQFQRAPRGIPSSNDHGSLKAPTAGQEGRWPSKPLTYSLTGSTQQSRSLGAQSSRAGETREAVPQPTVPLGTCMRANLQATSEDVRGFKAPGASKSSLLPRMSVSQDPRKLCLMEEAVSEFEPGKATKSETQPQVSATVVLLPDGQASVVPHASENLASQVPQGHLQSMPTGNMQASQELCDLMSARRSNMGHKEPRNPNCQGSCKSQSPMFPPTHKRENSRKPNLEKHEEMFQGLRTPQLTPGRKTEDTRQNEGVQLLPSKKQPPSISHFGENIKQFFQTIFSKKERKPAPVTAESQKTVKNRSCVYGSSAEAERLMTAVGQILEENMSLCHARHASKVNQQRQQFQAPVCGFPCNHRHPFYSEHSRMLSYAASSQQATLKNQSRPNRDRQIRDQ</sequence>
<gene>
    <name type="primary">SPATA31C2</name>
    <name type="synonym">FAM75C2</name>
</gene>
<comment type="function">
    <text evidence="1">May play a role in spermatogenesis.</text>
</comment>
<comment type="subcellular location">
    <subcellularLocation>
        <location evidence="4">Membrane</location>
        <topology evidence="4">Single-pass membrane protein</topology>
    </subcellularLocation>
</comment>
<comment type="similarity">
    <text evidence="4">Belongs to the SPATA31 family.</text>
</comment>
<protein>
    <recommendedName>
        <fullName>Spermatogenesis-associated protein 31C2</fullName>
    </recommendedName>
    <alternativeName>
        <fullName>Protein FAM75C2</fullName>
    </alternativeName>
</protein>
<organism>
    <name type="scientific">Homo sapiens</name>
    <name type="common">Human</name>
    <dbReference type="NCBI Taxonomy" id="9606"/>
    <lineage>
        <taxon>Eukaryota</taxon>
        <taxon>Metazoa</taxon>
        <taxon>Chordata</taxon>
        <taxon>Craniata</taxon>
        <taxon>Vertebrata</taxon>
        <taxon>Euteleostomi</taxon>
        <taxon>Mammalia</taxon>
        <taxon>Eutheria</taxon>
        <taxon>Euarchontoglires</taxon>
        <taxon>Primates</taxon>
        <taxon>Haplorrhini</taxon>
        <taxon>Catarrhini</taxon>
        <taxon>Hominidae</taxon>
        <taxon>Homo</taxon>
    </lineage>
</organism>